<keyword id="KW-0175">Coiled coil</keyword>
<keyword id="KW-0238">DNA-binding</keyword>
<keyword id="KW-0479">Metal-binding</keyword>
<keyword id="KW-0539">Nucleus</keyword>
<keyword id="KW-1185">Reference proteome</keyword>
<keyword id="KW-0804">Transcription</keyword>
<keyword id="KW-0805">Transcription regulation</keyword>
<keyword id="KW-0862">Zinc</keyword>
<keyword id="KW-0863">Zinc-finger</keyword>
<organism>
    <name type="scientific">Neurospora crassa (strain ATCC 24698 / 74-OR23-1A / CBS 708.71 / DSM 1257 / FGSC 987)</name>
    <dbReference type="NCBI Taxonomy" id="367110"/>
    <lineage>
        <taxon>Eukaryota</taxon>
        <taxon>Fungi</taxon>
        <taxon>Dikarya</taxon>
        <taxon>Ascomycota</taxon>
        <taxon>Pezizomycotina</taxon>
        <taxon>Sordariomycetes</taxon>
        <taxon>Sordariomycetidae</taxon>
        <taxon>Sordariales</taxon>
        <taxon>Sordariaceae</taxon>
        <taxon>Neurospora</taxon>
    </lineage>
</organism>
<evidence type="ECO:0000255" key="1"/>
<evidence type="ECO:0000255" key="2">
    <source>
        <dbReference type="PROSITE-ProRule" id="PRU00094"/>
    </source>
</evidence>
<evidence type="ECO:0000256" key="3">
    <source>
        <dbReference type="SAM" id="MobiDB-lite"/>
    </source>
</evidence>
<evidence type="ECO:0000305" key="4"/>
<protein>
    <recommendedName>
        <fullName>GATA type zinc finger protein asd-4</fullName>
    </recommendedName>
    <alternativeName>
        <fullName>Ascus development protein 4</fullName>
    </alternativeName>
</protein>
<dbReference type="EMBL" id="AF319953">
    <property type="protein sequence ID" value="AAG45180.1"/>
    <property type="molecule type" value="Genomic_DNA"/>
</dbReference>
<dbReference type="EMBL" id="CM002239">
    <property type="protein sequence ID" value="ESA43052.1"/>
    <property type="status" value="ALT_SEQ"/>
    <property type="molecule type" value="Genomic_DNA"/>
</dbReference>
<dbReference type="RefSeq" id="XP_011394349.1">
    <property type="nucleotide sequence ID" value="XM_011396047.1"/>
</dbReference>
<dbReference type="SMR" id="Q9HEV5"/>
<dbReference type="STRING" id="367110.Q9HEV5"/>
<dbReference type="PaxDb" id="5141-EFNCRP00000007048"/>
<dbReference type="EnsemblFungi" id="ESA43052">
    <property type="protein sequence ID" value="ESA43052"/>
    <property type="gene ID" value="NCU15829"/>
</dbReference>
<dbReference type="GeneID" id="23569377"/>
<dbReference type="KEGG" id="ncr:NCU15829"/>
<dbReference type="HOGENOM" id="CLU_035349_0_0_1"/>
<dbReference type="InParanoid" id="Q9HEV5"/>
<dbReference type="OrthoDB" id="515401at2759"/>
<dbReference type="Proteomes" id="UP000001805">
    <property type="component" value="Chromosome 4, Linkage Group IV"/>
</dbReference>
<dbReference type="GO" id="GO:0005634">
    <property type="term" value="C:nucleus"/>
    <property type="evidence" value="ECO:0000318"/>
    <property type="project" value="GO_Central"/>
</dbReference>
<dbReference type="GO" id="GO:0000981">
    <property type="term" value="F:DNA-binding transcription factor activity, RNA polymerase II-specific"/>
    <property type="evidence" value="ECO:0000318"/>
    <property type="project" value="GO_Central"/>
</dbReference>
<dbReference type="GO" id="GO:0000978">
    <property type="term" value="F:RNA polymerase II cis-regulatory region sequence-specific DNA binding"/>
    <property type="evidence" value="ECO:0000318"/>
    <property type="project" value="GO_Central"/>
</dbReference>
<dbReference type="GO" id="GO:0008270">
    <property type="term" value="F:zinc ion binding"/>
    <property type="evidence" value="ECO:0007669"/>
    <property type="project" value="UniProtKB-KW"/>
</dbReference>
<dbReference type="GO" id="GO:0000122">
    <property type="term" value="P:negative regulation of transcription by RNA polymerase II"/>
    <property type="evidence" value="ECO:0000318"/>
    <property type="project" value="GO_Central"/>
</dbReference>
<dbReference type="GO" id="GO:0045944">
    <property type="term" value="P:positive regulation of transcription by RNA polymerase II"/>
    <property type="evidence" value="ECO:0000318"/>
    <property type="project" value="GO_Central"/>
</dbReference>
<dbReference type="CDD" id="cd00202">
    <property type="entry name" value="ZnF_GATA"/>
    <property type="match status" value="1"/>
</dbReference>
<dbReference type="FunFam" id="3.30.50.10:FF:000007">
    <property type="entry name" value="Nitrogen regulatory AreA, N-terminal"/>
    <property type="match status" value="1"/>
</dbReference>
<dbReference type="Gene3D" id="3.30.50.10">
    <property type="entry name" value="Erythroid Transcription Factor GATA-1, subunit A"/>
    <property type="match status" value="1"/>
</dbReference>
<dbReference type="InterPro" id="IPR056998">
    <property type="entry name" value="Asd-4/GZF3_helical"/>
</dbReference>
<dbReference type="InterPro" id="IPR039355">
    <property type="entry name" value="Transcription_factor_GATA"/>
</dbReference>
<dbReference type="InterPro" id="IPR000679">
    <property type="entry name" value="Znf_GATA"/>
</dbReference>
<dbReference type="InterPro" id="IPR013088">
    <property type="entry name" value="Znf_NHR/GATA"/>
</dbReference>
<dbReference type="PANTHER" id="PTHR10071:SF338">
    <property type="entry name" value="GATA-TYPE DOMAIN-CONTAINING PROTEIN"/>
    <property type="match status" value="1"/>
</dbReference>
<dbReference type="PANTHER" id="PTHR10071">
    <property type="entry name" value="TRANSCRIPTION FACTOR GATA FAMILY MEMBER"/>
    <property type="match status" value="1"/>
</dbReference>
<dbReference type="Pfam" id="PF25026">
    <property type="entry name" value="Asd-4"/>
    <property type="match status" value="1"/>
</dbReference>
<dbReference type="Pfam" id="PF00320">
    <property type="entry name" value="GATA"/>
    <property type="match status" value="1"/>
</dbReference>
<dbReference type="PRINTS" id="PR00619">
    <property type="entry name" value="GATAZNFINGER"/>
</dbReference>
<dbReference type="SMART" id="SM00401">
    <property type="entry name" value="ZnF_GATA"/>
    <property type="match status" value="1"/>
</dbReference>
<dbReference type="SUPFAM" id="SSF57716">
    <property type="entry name" value="Glucocorticoid receptor-like (DNA-binding domain)"/>
    <property type="match status" value="1"/>
</dbReference>
<dbReference type="PROSITE" id="PS00344">
    <property type="entry name" value="GATA_ZN_FINGER_1"/>
    <property type="match status" value="1"/>
</dbReference>
<dbReference type="PROSITE" id="PS50114">
    <property type="entry name" value="GATA_ZN_FINGER_2"/>
    <property type="match status" value="1"/>
</dbReference>
<comment type="function">
    <text>Transcriptional regulator that functions in sexual development; disruption of asd-4 gene results in agenesis of ascus and ascospore with macroscopically normal fruiting body formation. The GATA-type zinc finger domain binds to DNA sequences from its own promoter region.</text>
</comment>
<comment type="subunit">
    <text>Homotetramer.</text>
</comment>
<comment type="subcellular location">
    <subcellularLocation>
        <location>Nucleus</location>
    </subcellularLocation>
</comment>
<comment type="sequence caution" evidence="4">
    <conflict type="erroneous gene model prediction">
        <sequence resource="EMBL-CDS" id="ESA43052"/>
    </conflict>
</comment>
<gene>
    <name type="primary">asd-4</name>
    <name type="ORF">NCU15829</name>
    <name type="ORF">NCU20921</name>
</gene>
<sequence>MATMANHDRETTQPTCQNCATSTTPLWRRDEMGQVLCNACGLFLKLHGRPRPISLKTDVIKSRNRVKTMRPDLAKQKKQQQQQQQQQNLAATADMNGGVGMMDPNNPAAAARRASQKSINGHPVDDNSPVSRTGTPNVYNPHIPIDHSLEYQFQAQQIPGFGVPTASPGRAPSPMNGEHMPQTHEQLLAANASLKTRVSELEVIQELYRGRLHQLETEENIRQASEPGKLEAQLRAQIDAMGEAHQQLQKELEESHRRENMLKRRLDELEVELKDVKDALESQDNGRHKKIRLDENVKTEPYAEVVEPQQPEQQQPAPAEQPIPTPMAIDEATPAPAPAPEAAPEQAPAPAPEPVQEQAQEPEPAPVSEPTEASAPAPAPEADSVVPEPTPAAPESAPTEEPAAPETEASEPPTTAPVEEAPKAES</sequence>
<accession>Q9HEV5</accession>
<accession>Q7S997</accession>
<accession>V5IMY2</accession>
<proteinExistence type="evidence at protein level"/>
<feature type="chain" id="PRO_0000083473" description="GATA type zinc finger protein asd-4">
    <location>
        <begin position="1"/>
        <end position="426"/>
    </location>
</feature>
<feature type="zinc finger region" description="GATA-type" evidence="2">
    <location>
        <begin position="16"/>
        <end position="40"/>
    </location>
</feature>
<feature type="region of interest" description="Disordered" evidence="3">
    <location>
        <begin position="70"/>
        <end position="143"/>
    </location>
</feature>
<feature type="region of interest" description="Disordered" evidence="3">
    <location>
        <begin position="159"/>
        <end position="178"/>
    </location>
</feature>
<feature type="region of interest" description="Disordered" evidence="3">
    <location>
        <begin position="306"/>
        <end position="426"/>
    </location>
</feature>
<feature type="coiled-coil region" evidence="1">
    <location>
        <begin position="182"/>
        <end position="292"/>
    </location>
</feature>
<feature type="compositionally biased region" description="Low complexity" evidence="3">
    <location>
        <begin position="104"/>
        <end position="113"/>
    </location>
</feature>
<feature type="compositionally biased region" description="Polar residues" evidence="3">
    <location>
        <begin position="128"/>
        <end position="138"/>
    </location>
</feature>
<feature type="compositionally biased region" description="Low complexity" evidence="3">
    <location>
        <begin position="306"/>
        <end position="318"/>
    </location>
</feature>
<feature type="compositionally biased region" description="Pro residues" evidence="3">
    <location>
        <begin position="335"/>
        <end position="353"/>
    </location>
</feature>
<feature type="compositionally biased region" description="Low complexity" evidence="3">
    <location>
        <begin position="354"/>
        <end position="419"/>
    </location>
</feature>
<reference key="1">
    <citation type="journal article" date="2000" name="Biochemistry">
        <title>ASD4, a new GATA factor of Neurospora crassa, displays sequence-specific DNA binding and functions in ascus and ascospore development.</title>
        <authorList>
            <person name="Feng B."/>
            <person name="Haas H."/>
            <person name="Marzluf G.A."/>
        </authorList>
    </citation>
    <scope>NUCLEOTIDE SEQUENCE [GENOMIC DNA]</scope>
    <scope>CHARACTERIZATION</scope>
</reference>
<reference key="2">
    <citation type="journal article" date="2003" name="Nature">
        <title>The genome sequence of the filamentous fungus Neurospora crassa.</title>
        <authorList>
            <person name="Galagan J.E."/>
            <person name="Calvo S.E."/>
            <person name="Borkovich K.A."/>
            <person name="Selker E.U."/>
            <person name="Read N.D."/>
            <person name="Jaffe D.B."/>
            <person name="FitzHugh W."/>
            <person name="Ma L.-J."/>
            <person name="Smirnov S."/>
            <person name="Purcell S."/>
            <person name="Rehman B."/>
            <person name="Elkins T."/>
            <person name="Engels R."/>
            <person name="Wang S."/>
            <person name="Nielsen C.B."/>
            <person name="Butler J."/>
            <person name="Endrizzi M."/>
            <person name="Qui D."/>
            <person name="Ianakiev P."/>
            <person name="Bell-Pedersen D."/>
            <person name="Nelson M.A."/>
            <person name="Werner-Washburne M."/>
            <person name="Selitrennikoff C.P."/>
            <person name="Kinsey J.A."/>
            <person name="Braun E.L."/>
            <person name="Zelter A."/>
            <person name="Schulte U."/>
            <person name="Kothe G.O."/>
            <person name="Jedd G."/>
            <person name="Mewes H.-W."/>
            <person name="Staben C."/>
            <person name="Marcotte E."/>
            <person name="Greenberg D."/>
            <person name="Roy A."/>
            <person name="Foley K."/>
            <person name="Naylor J."/>
            <person name="Stange-Thomann N."/>
            <person name="Barrett R."/>
            <person name="Gnerre S."/>
            <person name="Kamal M."/>
            <person name="Kamvysselis M."/>
            <person name="Mauceli E.W."/>
            <person name="Bielke C."/>
            <person name="Rudd S."/>
            <person name="Frishman D."/>
            <person name="Krystofova S."/>
            <person name="Rasmussen C."/>
            <person name="Metzenberg R.L."/>
            <person name="Perkins D.D."/>
            <person name="Kroken S."/>
            <person name="Cogoni C."/>
            <person name="Macino G."/>
            <person name="Catcheside D.E.A."/>
            <person name="Li W."/>
            <person name="Pratt R.J."/>
            <person name="Osmani S.A."/>
            <person name="DeSouza C.P.C."/>
            <person name="Glass N.L."/>
            <person name="Orbach M.J."/>
            <person name="Berglund J.A."/>
            <person name="Voelker R."/>
            <person name="Yarden O."/>
            <person name="Plamann M."/>
            <person name="Seiler S."/>
            <person name="Dunlap J.C."/>
            <person name="Radford A."/>
            <person name="Aramayo R."/>
            <person name="Natvig D.O."/>
            <person name="Alex L.A."/>
            <person name="Mannhaupt G."/>
            <person name="Ebbole D.J."/>
            <person name="Freitag M."/>
            <person name="Paulsen I."/>
            <person name="Sachs M.S."/>
            <person name="Lander E.S."/>
            <person name="Nusbaum C."/>
            <person name="Birren B.W."/>
        </authorList>
    </citation>
    <scope>NUCLEOTIDE SEQUENCE [LARGE SCALE GENOMIC DNA]</scope>
    <source>
        <strain>ATCC 24698 / 74-OR23-1A / CBS 708.71 / DSM 1257 / FGSC 987</strain>
    </source>
</reference>
<name>ASD4_NEUCR</name>